<evidence type="ECO:0000255" key="1">
    <source>
        <dbReference type="HAMAP-Rule" id="MF_00347"/>
    </source>
</evidence>
<gene>
    <name evidence="1" type="primary">ppk</name>
    <name type="ordered locus">Exig_0846</name>
</gene>
<accession>B1YL94</accession>
<proteinExistence type="inferred from homology"/>
<keyword id="KW-0067">ATP-binding</keyword>
<keyword id="KW-0418">Kinase</keyword>
<keyword id="KW-0460">Magnesium</keyword>
<keyword id="KW-0479">Metal-binding</keyword>
<keyword id="KW-0547">Nucleotide-binding</keyword>
<keyword id="KW-0597">Phosphoprotein</keyword>
<keyword id="KW-1185">Reference proteome</keyword>
<keyword id="KW-0808">Transferase</keyword>
<protein>
    <recommendedName>
        <fullName evidence="1">Polyphosphate kinase</fullName>
        <ecNumber evidence="1">2.7.4.1</ecNumber>
    </recommendedName>
    <alternativeName>
        <fullName evidence="1">ATP-polyphosphate phosphotransferase</fullName>
    </alternativeName>
    <alternativeName>
        <fullName evidence="1">Polyphosphoric acid kinase</fullName>
    </alternativeName>
</protein>
<feature type="chain" id="PRO_1000205323" description="Polyphosphate kinase">
    <location>
        <begin position="1"/>
        <end position="719"/>
    </location>
</feature>
<feature type="active site" description="Phosphohistidine intermediate" evidence="1">
    <location>
        <position position="437"/>
    </location>
</feature>
<feature type="binding site" evidence="1">
    <location>
        <position position="47"/>
    </location>
    <ligand>
        <name>ATP</name>
        <dbReference type="ChEBI" id="CHEBI:30616"/>
    </ligand>
</feature>
<feature type="binding site" evidence="1">
    <location>
        <position position="377"/>
    </location>
    <ligand>
        <name>Mg(2+)</name>
        <dbReference type="ChEBI" id="CHEBI:18420"/>
    </ligand>
</feature>
<feature type="binding site" evidence="1">
    <location>
        <position position="407"/>
    </location>
    <ligand>
        <name>Mg(2+)</name>
        <dbReference type="ChEBI" id="CHEBI:18420"/>
    </ligand>
</feature>
<feature type="binding site" evidence="1">
    <location>
        <position position="470"/>
    </location>
    <ligand>
        <name>ATP</name>
        <dbReference type="ChEBI" id="CHEBI:30616"/>
    </ligand>
</feature>
<feature type="binding site" evidence="1">
    <location>
        <position position="566"/>
    </location>
    <ligand>
        <name>ATP</name>
        <dbReference type="ChEBI" id="CHEBI:30616"/>
    </ligand>
</feature>
<feature type="binding site" evidence="1">
    <location>
        <position position="594"/>
    </location>
    <ligand>
        <name>ATP</name>
        <dbReference type="ChEBI" id="CHEBI:30616"/>
    </ligand>
</feature>
<name>PPK1_EXIS2</name>
<dbReference type="EC" id="2.7.4.1" evidence="1"/>
<dbReference type="EMBL" id="CP001022">
    <property type="protein sequence ID" value="ACB60326.1"/>
    <property type="molecule type" value="Genomic_DNA"/>
</dbReference>
<dbReference type="RefSeq" id="WP_012369750.1">
    <property type="nucleotide sequence ID" value="NC_010556.1"/>
</dbReference>
<dbReference type="SMR" id="B1YL94"/>
<dbReference type="STRING" id="262543.Exig_0846"/>
<dbReference type="KEGG" id="esi:Exig_0846"/>
<dbReference type="eggNOG" id="COG0855">
    <property type="taxonomic scope" value="Bacteria"/>
</dbReference>
<dbReference type="HOGENOM" id="CLU_009678_5_0_9"/>
<dbReference type="OrthoDB" id="9761456at2"/>
<dbReference type="Proteomes" id="UP000001681">
    <property type="component" value="Chromosome"/>
</dbReference>
<dbReference type="GO" id="GO:0009358">
    <property type="term" value="C:polyphosphate kinase complex"/>
    <property type="evidence" value="ECO:0007669"/>
    <property type="project" value="InterPro"/>
</dbReference>
<dbReference type="GO" id="GO:0005524">
    <property type="term" value="F:ATP binding"/>
    <property type="evidence" value="ECO:0007669"/>
    <property type="project" value="UniProtKB-KW"/>
</dbReference>
<dbReference type="GO" id="GO:0046872">
    <property type="term" value="F:metal ion binding"/>
    <property type="evidence" value="ECO:0007669"/>
    <property type="project" value="UniProtKB-KW"/>
</dbReference>
<dbReference type="GO" id="GO:0008976">
    <property type="term" value="F:polyphosphate kinase activity"/>
    <property type="evidence" value="ECO:0007669"/>
    <property type="project" value="UniProtKB-UniRule"/>
</dbReference>
<dbReference type="GO" id="GO:0006799">
    <property type="term" value="P:polyphosphate biosynthetic process"/>
    <property type="evidence" value="ECO:0007669"/>
    <property type="project" value="UniProtKB-UniRule"/>
</dbReference>
<dbReference type="CDD" id="cd09165">
    <property type="entry name" value="PLDc_PaPPK1_C1_like"/>
    <property type="match status" value="1"/>
</dbReference>
<dbReference type="CDD" id="cd09168">
    <property type="entry name" value="PLDc_PaPPK1_C2_like"/>
    <property type="match status" value="1"/>
</dbReference>
<dbReference type="Gene3D" id="3.30.870.10">
    <property type="entry name" value="Endonuclease Chain A"/>
    <property type="match status" value="2"/>
</dbReference>
<dbReference type="Gene3D" id="3.30.1840.10">
    <property type="entry name" value="Polyphosphate kinase middle domain"/>
    <property type="match status" value="1"/>
</dbReference>
<dbReference type="Gene3D" id="1.20.58.310">
    <property type="entry name" value="Polyphosphate kinase N-terminal domain"/>
    <property type="match status" value="1"/>
</dbReference>
<dbReference type="HAMAP" id="MF_00347">
    <property type="entry name" value="Polyphosphate_kinase"/>
    <property type="match status" value="1"/>
</dbReference>
<dbReference type="InterPro" id="IPR003414">
    <property type="entry name" value="PP_kinase"/>
</dbReference>
<dbReference type="InterPro" id="IPR041108">
    <property type="entry name" value="PP_kinase_C_1"/>
</dbReference>
<dbReference type="InterPro" id="IPR024953">
    <property type="entry name" value="PP_kinase_middle"/>
</dbReference>
<dbReference type="InterPro" id="IPR036830">
    <property type="entry name" value="PP_kinase_middle_dom_sf"/>
</dbReference>
<dbReference type="InterPro" id="IPR025200">
    <property type="entry name" value="PPK_C_dom2"/>
</dbReference>
<dbReference type="InterPro" id="IPR025198">
    <property type="entry name" value="PPK_N_dom"/>
</dbReference>
<dbReference type="InterPro" id="IPR036832">
    <property type="entry name" value="PPK_N_dom_sf"/>
</dbReference>
<dbReference type="NCBIfam" id="TIGR03705">
    <property type="entry name" value="poly_P_kin"/>
    <property type="match status" value="1"/>
</dbReference>
<dbReference type="NCBIfam" id="NF003917">
    <property type="entry name" value="PRK05443.1-1"/>
    <property type="match status" value="1"/>
</dbReference>
<dbReference type="NCBIfam" id="NF003918">
    <property type="entry name" value="PRK05443.1-2"/>
    <property type="match status" value="1"/>
</dbReference>
<dbReference type="NCBIfam" id="NF003920">
    <property type="entry name" value="PRK05443.2-1"/>
    <property type="match status" value="1"/>
</dbReference>
<dbReference type="NCBIfam" id="NF003921">
    <property type="entry name" value="PRK05443.2-2"/>
    <property type="match status" value="1"/>
</dbReference>
<dbReference type="PANTHER" id="PTHR30218">
    <property type="entry name" value="POLYPHOSPHATE KINASE"/>
    <property type="match status" value="1"/>
</dbReference>
<dbReference type="PANTHER" id="PTHR30218:SF0">
    <property type="entry name" value="POLYPHOSPHATE KINASE"/>
    <property type="match status" value="1"/>
</dbReference>
<dbReference type="Pfam" id="PF02503">
    <property type="entry name" value="PP_kinase"/>
    <property type="match status" value="1"/>
</dbReference>
<dbReference type="Pfam" id="PF13090">
    <property type="entry name" value="PP_kinase_C"/>
    <property type="match status" value="1"/>
</dbReference>
<dbReference type="Pfam" id="PF17941">
    <property type="entry name" value="PP_kinase_C_1"/>
    <property type="match status" value="1"/>
</dbReference>
<dbReference type="Pfam" id="PF13089">
    <property type="entry name" value="PP_kinase_N"/>
    <property type="match status" value="1"/>
</dbReference>
<dbReference type="PIRSF" id="PIRSF015589">
    <property type="entry name" value="PP_kinase"/>
    <property type="match status" value="1"/>
</dbReference>
<dbReference type="SUPFAM" id="SSF56024">
    <property type="entry name" value="Phospholipase D/nuclease"/>
    <property type="match status" value="2"/>
</dbReference>
<dbReference type="SUPFAM" id="SSF143724">
    <property type="entry name" value="PHP14-like"/>
    <property type="match status" value="1"/>
</dbReference>
<dbReference type="SUPFAM" id="SSF140356">
    <property type="entry name" value="PPK N-terminal domain-like"/>
    <property type="match status" value="1"/>
</dbReference>
<comment type="function">
    <text evidence="1">Catalyzes the reversible transfer of the terminal phosphate of ATP to form a long-chain polyphosphate (polyP).</text>
</comment>
<comment type="catalytic activity">
    <reaction evidence="1">
        <text>[phosphate](n) + ATP = [phosphate](n+1) + ADP</text>
        <dbReference type="Rhea" id="RHEA:19573"/>
        <dbReference type="Rhea" id="RHEA-COMP:9859"/>
        <dbReference type="Rhea" id="RHEA-COMP:14280"/>
        <dbReference type="ChEBI" id="CHEBI:16838"/>
        <dbReference type="ChEBI" id="CHEBI:30616"/>
        <dbReference type="ChEBI" id="CHEBI:456216"/>
        <dbReference type="EC" id="2.7.4.1"/>
    </reaction>
</comment>
<comment type="cofactor">
    <cofactor evidence="1">
        <name>Mg(2+)</name>
        <dbReference type="ChEBI" id="CHEBI:18420"/>
    </cofactor>
</comment>
<comment type="PTM">
    <text evidence="1">An intermediate of this reaction is the autophosphorylated ppk in which a phosphate is covalently linked to a histidine residue through a N-P bond.</text>
</comment>
<comment type="similarity">
    <text evidence="1">Belongs to the polyphosphate kinase 1 (PPK1) family.</text>
</comment>
<reference key="1">
    <citation type="submission" date="2008-04" db="EMBL/GenBank/DDBJ databases">
        <title>Complete sequence of chromosome of Exiguobacterium sibiricum 255-15.</title>
        <authorList>
            <consortium name="US DOE Joint Genome Institute"/>
            <person name="Copeland A."/>
            <person name="Lucas S."/>
            <person name="Lapidus A."/>
            <person name="Glavina del Rio T."/>
            <person name="Dalin E."/>
            <person name="Tice H."/>
            <person name="Bruce D."/>
            <person name="Goodwin L."/>
            <person name="Pitluck S."/>
            <person name="Kiss H."/>
            <person name="Chertkov O."/>
            <person name="Monk C."/>
            <person name="Brettin T."/>
            <person name="Detter J.C."/>
            <person name="Han C."/>
            <person name="Kuske C.R."/>
            <person name="Schmutz J."/>
            <person name="Larimer F."/>
            <person name="Land M."/>
            <person name="Hauser L."/>
            <person name="Kyrpides N."/>
            <person name="Mikhailova N."/>
            <person name="Vishnivetskaya T."/>
            <person name="Rodrigues D.F."/>
            <person name="Gilichinsky D."/>
            <person name="Tiedje J."/>
            <person name="Richardson P."/>
        </authorList>
    </citation>
    <scope>NUCLEOTIDE SEQUENCE [LARGE SCALE GENOMIC DNA]</scope>
    <source>
        <strain>DSM 17290 / CCUG 55495 / CIP 109462 / JCM 13490 / 255-15</strain>
    </source>
</reference>
<sequence>MKIDSPEFFNNREISWLQFNERVLGEVTDTRNPLMERFKFLGIFSSNLDEFYMVRVGGLKDEVLAGFNKPENKQQLTPKQQLRAIATKTKELVDQQYEAFKDVTQALKAEGISFLKHDELNEMQSEYVKTFFREQVFPVLTPVAVDAYRPFPMLSSKSLNIATALEAEDGSKRNLALVQVPAVLPRFVDLPVDDEETTAVILLEDVIISFIDSLFKGYHVLSAMPFRITRNADLPFHEEGTHDLLKLIEKELKKRRWGVGIRLEIQKNAINTNLLNMLRDVLDLQDRDIYAVDGPIDLTFAFAFYSQIGVEYDHLIYQTIMPVEPPALEKSKKLFDQILQQDYLLHHPYHTFDPIVRLIVQAANDPNVLAIKQTLYRVSGDSPIIKALKTAAENGKQVTVLVELKARFDEAKNIEWAKQLEKAGAHVIYGYSDLKTHSKITLIVRLQEGRIQRFVHLGTGNYNDSTAKLYTDIGLLTAKEQIAEDATNFFNWLSGYGEQPEWNALHTSPNSMLEKFLSLIDEEIKYHKKHGNGRIVAKMNSLTEKDIIVKLYQASRAGVRIELIVRGVCCLRPQIKGVSENIRVTSVVDRYLEHSRIFYFHHNGDDLIYCSSADWMTRNMRKRIEILFPIADEEQKNYIKDCLALTMADNVKAREQDDSGNYHYVTKGKQECESQILIQLYTNGKLKAKPSFEHPLEQKWTPVERAEEKITFDPTTSKK</sequence>
<organism>
    <name type="scientific">Exiguobacterium sibiricum (strain DSM 17290 / CCUG 55495 / CIP 109462 / JCM 13490 / 255-15)</name>
    <dbReference type="NCBI Taxonomy" id="262543"/>
    <lineage>
        <taxon>Bacteria</taxon>
        <taxon>Bacillati</taxon>
        <taxon>Bacillota</taxon>
        <taxon>Bacilli</taxon>
        <taxon>Bacillales</taxon>
        <taxon>Bacillales Family XII. Incertae Sedis</taxon>
        <taxon>Exiguobacterium</taxon>
    </lineage>
</organism>